<name>BOA4_BOTFB</name>
<comment type="function">
    <text evidence="4 5 6 11">Cytochrome P450 monooxygenase; part of the gene cluster A that mediates the biosynthesis of botcinic acid and its botcinin derivatives, acetate-derived polyketides that contribute to virulence when combined with the sesquiterpene botrydial (PubMed:18208491, PubMed:21722295). Botcinic acid and its derivatives have been shown to induce chlorosis and necrosis during host plant infection, but also have antifungal activities (PubMed:18208491, PubMed:21722295). Two polyketide synthases, BOA6 and BOA9, are involved in the biosynthesis of botcinins. BOA6 mediates the formation of the per-methylated tetraketide core by condensation of four units of malonyl-CoA with one unit of acetyl-CoA, which would be methylated in activated methylene groups to yield a bicyclic acid intermediate that could then either be converted to botrylactone derivatives or lose the starter acetate unit through a retro-Claisen type C-C bond cleavage to yield botcinin derivatives (PubMed:23203902). The second polyketide synthase, BOA9, is probably required for the biosynthesis of the tetraketide side chain of botcinins (Probable). The methyltransferase (MT) domain within BOA6 is probably responsible for the incorporation of four methyl groups (Probable). The trans-enoyl reductase BOA5 might take over the enoyl reductase function of BOA6 that misses an ER domain (Probable). The monooxygenases BOA2, BOA3 and BOA4 might be involved in further hydroxylations at C4, C5 and C8, whereas BOA7, close to BOA9, could potentially be involved in the hydroxylation at C4 in the side chain of botcinins (Probable).</text>
</comment>
<comment type="cofactor">
    <cofactor evidence="1">
        <name>heme</name>
        <dbReference type="ChEBI" id="CHEBI:30413"/>
    </cofactor>
</comment>
<comment type="pathway">
    <text evidence="10 11">Polyketide biosynthesis.</text>
</comment>
<comment type="subcellular location">
    <subcellularLocation>
        <location evidence="2">Membrane</location>
        <topology evidence="2">Single-pass membrane protein</topology>
    </subcellularLocation>
</comment>
<comment type="induction">
    <text evidence="4 5">Expression of the botcinic acid clusters genes BOA1-13 and BOA17 is coregulated by BCG1 during both in vitro and in planta growth.</text>
</comment>
<comment type="similarity">
    <text evidence="9">Belongs to the cytochrome P450 family.</text>
</comment>
<organism>
    <name type="scientific">Botryotinia fuckeliana (strain B05.10)</name>
    <name type="common">Noble rot fungus</name>
    <name type="synonym">Botrytis cinerea</name>
    <dbReference type="NCBI Taxonomy" id="332648"/>
    <lineage>
        <taxon>Eukaryota</taxon>
        <taxon>Fungi</taxon>
        <taxon>Dikarya</taxon>
        <taxon>Ascomycota</taxon>
        <taxon>Pezizomycotina</taxon>
        <taxon>Leotiomycetes</taxon>
        <taxon>Helotiales</taxon>
        <taxon>Sclerotiniaceae</taxon>
        <taxon>Botrytis</taxon>
    </lineage>
</organism>
<keyword id="KW-0325">Glycoprotein</keyword>
<keyword id="KW-0349">Heme</keyword>
<keyword id="KW-0408">Iron</keyword>
<keyword id="KW-0472">Membrane</keyword>
<keyword id="KW-0479">Metal-binding</keyword>
<keyword id="KW-0503">Monooxygenase</keyword>
<keyword id="KW-0560">Oxidoreductase</keyword>
<keyword id="KW-0812">Transmembrane</keyword>
<keyword id="KW-1133">Transmembrane helix</keyword>
<keyword id="KW-0843">Virulence</keyword>
<reference key="1">
    <citation type="journal article" date="2008" name="Mol. Microbiol.">
        <title>The Galpha subunit BCG1, the phospholipase C (BcPLC1) and the calcineurin phosphatase co-ordinately regulate gene expression in the grey mould fungus Botrytis cinerea.</title>
        <authorList>
            <person name="Schumacher J."/>
            <person name="Viaud M."/>
            <person name="Simon A."/>
            <person name="Tudzynski B."/>
        </authorList>
    </citation>
    <scope>NUCLEOTIDE SEQUENCE [GENOMIC DNA]</scope>
    <scope>INDUCTION</scope>
    <source>
        <strain>B05.10</strain>
    </source>
</reference>
<reference key="2">
    <citation type="journal article" date="2011" name="Mol. Plant Pathol.">
        <title>The Botrytis cinerea phytotoxin botcinic acid requires two polyketide synthases for production and has a redundant role in virulence with botrydial.</title>
        <authorList>
            <person name="Dalmais B."/>
            <person name="Schumacher J."/>
            <person name="Moraga J."/>
            <person name="Le Pecheur P."/>
            <person name="Tudzynski B."/>
            <person name="Collado I.G."/>
            <person name="Viaud M."/>
        </authorList>
    </citation>
    <scope>FUNCTION</scope>
    <scope>INDUCTION</scope>
    <scope>PATHWAY</scope>
</reference>
<reference key="3">
    <citation type="journal article" date="2013" name="ChemBioChem">
        <title>A shared biosynthetic pathway for botcinins and botrylactones revealed through gene deletions.</title>
        <authorList>
            <person name="Massaroli M."/>
            <person name="Moraga J."/>
            <person name="Bastos Borges K."/>
            <person name="Ramirez-Fernandez J."/>
            <person name="Viaud M."/>
            <person name="Gonzalez Collado I."/>
            <person name="Duran-Patron R."/>
            <person name="Hernandez-Galan R."/>
        </authorList>
    </citation>
    <scope>FUNCTION</scope>
    <scope>PATHWAY</scope>
</reference>
<accession>B1GVX2</accession>
<feature type="chain" id="PRO_0000444640" description="Cytochrome P450 monooxygenase BOA4">
    <location>
        <begin position="1"/>
        <end position="495"/>
    </location>
</feature>
<feature type="transmembrane region" description="Helical" evidence="2">
    <location>
        <begin position="12"/>
        <end position="31"/>
    </location>
</feature>
<feature type="binding site" description="axial binding residue" evidence="1">
    <location>
        <position position="439"/>
    </location>
    <ligand>
        <name>heme</name>
        <dbReference type="ChEBI" id="CHEBI:30413"/>
    </ligand>
    <ligandPart>
        <name>Fe</name>
        <dbReference type="ChEBI" id="CHEBI:18248"/>
    </ligandPart>
</feature>
<feature type="glycosylation site" description="N-linked (GlcNAc...) asparagine" evidence="3">
    <location>
        <position position="115"/>
    </location>
</feature>
<proteinExistence type="evidence at transcript level"/>
<gene>
    <name evidence="8" type="primary">BOA4</name>
    <name evidence="7" type="synonym">P450-1</name>
</gene>
<dbReference type="EC" id="1.-.-.-" evidence="10"/>
<dbReference type="EMBL" id="AM930227">
    <property type="protein sequence ID" value="CAP58781.1"/>
    <property type="molecule type" value="Genomic_DNA"/>
</dbReference>
<dbReference type="SMR" id="B1GVX2"/>
<dbReference type="GlyCosmos" id="B1GVX2">
    <property type="glycosylation" value="1 site, No reported glycans"/>
</dbReference>
<dbReference type="EnsemblFungi" id="Bcin01g00040.1">
    <property type="protein sequence ID" value="Bcin01p00040.1"/>
    <property type="gene ID" value="Bcin01g00040"/>
</dbReference>
<dbReference type="VEuPathDB" id="FungiDB:Bcin01g00040"/>
<dbReference type="OrthoDB" id="1844152at2759"/>
<dbReference type="GO" id="GO:0016020">
    <property type="term" value="C:membrane"/>
    <property type="evidence" value="ECO:0007669"/>
    <property type="project" value="UniProtKB-SubCell"/>
</dbReference>
<dbReference type="GO" id="GO:0020037">
    <property type="term" value="F:heme binding"/>
    <property type="evidence" value="ECO:0007669"/>
    <property type="project" value="InterPro"/>
</dbReference>
<dbReference type="GO" id="GO:0005506">
    <property type="term" value="F:iron ion binding"/>
    <property type="evidence" value="ECO:0007669"/>
    <property type="project" value="InterPro"/>
</dbReference>
<dbReference type="GO" id="GO:0004497">
    <property type="term" value="F:monooxygenase activity"/>
    <property type="evidence" value="ECO:0007669"/>
    <property type="project" value="UniProtKB-KW"/>
</dbReference>
<dbReference type="GO" id="GO:0016705">
    <property type="term" value="F:oxidoreductase activity, acting on paired donors, with incorporation or reduction of molecular oxygen"/>
    <property type="evidence" value="ECO:0007669"/>
    <property type="project" value="InterPro"/>
</dbReference>
<dbReference type="GO" id="GO:0019748">
    <property type="term" value="P:secondary metabolic process"/>
    <property type="evidence" value="ECO:0007669"/>
    <property type="project" value="UniProtKB-ARBA"/>
</dbReference>
<dbReference type="CDD" id="cd11041">
    <property type="entry name" value="CYP503A1-like"/>
    <property type="match status" value="1"/>
</dbReference>
<dbReference type="Gene3D" id="1.10.630.10">
    <property type="entry name" value="Cytochrome P450"/>
    <property type="match status" value="1"/>
</dbReference>
<dbReference type="InterPro" id="IPR001128">
    <property type="entry name" value="Cyt_P450"/>
</dbReference>
<dbReference type="InterPro" id="IPR017972">
    <property type="entry name" value="Cyt_P450_CS"/>
</dbReference>
<dbReference type="InterPro" id="IPR002403">
    <property type="entry name" value="Cyt_P450_E_grp-IV"/>
</dbReference>
<dbReference type="InterPro" id="IPR036396">
    <property type="entry name" value="Cyt_P450_sf"/>
</dbReference>
<dbReference type="PANTHER" id="PTHR46206">
    <property type="entry name" value="CYTOCHROME P450"/>
    <property type="match status" value="1"/>
</dbReference>
<dbReference type="PANTHER" id="PTHR46206:SF6">
    <property type="entry name" value="CYTOCHROME P450 MONOOXYGENASE AN1598-RELATED"/>
    <property type="match status" value="1"/>
</dbReference>
<dbReference type="Pfam" id="PF00067">
    <property type="entry name" value="p450"/>
    <property type="match status" value="1"/>
</dbReference>
<dbReference type="PRINTS" id="PR00465">
    <property type="entry name" value="EP450IV"/>
</dbReference>
<dbReference type="SUPFAM" id="SSF48264">
    <property type="entry name" value="Cytochrome P450"/>
    <property type="match status" value="1"/>
</dbReference>
<dbReference type="PROSITE" id="PS00086">
    <property type="entry name" value="CYTOCHROME_P450"/>
    <property type="match status" value="1"/>
</dbReference>
<protein>
    <recommendedName>
        <fullName evidence="8">Cytochrome P450 monooxygenase BOA4</fullName>
        <ecNumber evidence="10">1.-.-.-</ecNumber>
    </recommendedName>
    <alternativeName>
        <fullName evidence="8">Botcinic acid biosynthesis cluster A protein 4</fullName>
    </alternativeName>
</protein>
<sequence>MIHFADLGAISLANSNTVIAGCIVFALYYLFQFLNSKKLNFDAPVIGDASDLRSALINGYNQCPNTPFLLPTAAHPTIILPIKYIDEIKSLPPDKISFLEEFRDRYFGHYTAFANNTEGDAVTTSVKVDLTQSIARALENMQAETELAFATELPKPKDWMSVTLYPIILRMVAKVSGRVMVGEPLCRNEKWIQISTTYTRDTFLGGRAVWARHPLFRPIYALYSPELKKVRQHYTDAAEFLRPIFNQRFKEMERDDFEKPQDMIQWMIDNSGNNAKDATFQGRCQLLISFAALHTTSGLLGNAMLDLAARPKYIEALREEIAANLPENTQITKQILTKLRKMDSFLKESQRMNPLNLVTMNRKMMDTVQLSDGTILPKGSFLGMAAGSIGFDPRIFENPDEFDGFRFEKLRQQEGAENKFQLVTTGKDSLAFGHGTHSCPGRFFASNEIKTMLIELLRNYDFQLLPGTERPKNLKSDMSLVVDPTAQIQIKERCR</sequence>
<evidence type="ECO:0000250" key="1">
    <source>
        <dbReference type="UniProtKB" id="P04798"/>
    </source>
</evidence>
<evidence type="ECO:0000255" key="2"/>
<evidence type="ECO:0000255" key="3">
    <source>
        <dbReference type="PROSITE-ProRule" id="PRU00498"/>
    </source>
</evidence>
<evidence type="ECO:0000269" key="4">
    <source>
    </source>
</evidence>
<evidence type="ECO:0000269" key="5">
    <source>
    </source>
</evidence>
<evidence type="ECO:0000269" key="6">
    <source>
    </source>
</evidence>
<evidence type="ECO:0000303" key="7">
    <source>
    </source>
</evidence>
<evidence type="ECO:0000303" key="8">
    <source>
    </source>
</evidence>
<evidence type="ECO:0000305" key="9"/>
<evidence type="ECO:0000305" key="10">
    <source>
    </source>
</evidence>
<evidence type="ECO:0000305" key="11">
    <source>
    </source>
</evidence>